<name>URK_MYCGE</name>
<gene>
    <name type="primary">udk</name>
    <name type="ordered locus">MG382</name>
</gene>
<reference key="1">
    <citation type="journal article" date="1995" name="Science">
        <title>The minimal gene complement of Mycoplasma genitalium.</title>
        <authorList>
            <person name="Fraser C.M."/>
            <person name="Gocayne J.D."/>
            <person name="White O."/>
            <person name="Adams M.D."/>
            <person name="Clayton R.A."/>
            <person name="Fleischmann R.D."/>
            <person name="Bult C.J."/>
            <person name="Kerlavage A.R."/>
            <person name="Sutton G.G."/>
            <person name="Kelley J.M."/>
            <person name="Fritchman J.L."/>
            <person name="Weidman J.F."/>
            <person name="Small K.V."/>
            <person name="Sandusky M."/>
            <person name="Fuhrmann J.L."/>
            <person name="Nguyen D.T."/>
            <person name="Utterback T.R."/>
            <person name="Saudek D.M."/>
            <person name="Phillips C.A."/>
            <person name="Merrick J.M."/>
            <person name="Tomb J.-F."/>
            <person name="Dougherty B.A."/>
            <person name="Bott K.F."/>
            <person name="Hu P.-C."/>
            <person name="Lucier T.S."/>
            <person name="Peterson S.N."/>
            <person name="Smith H.O."/>
            <person name="Hutchison C.A. III"/>
            <person name="Venter J.C."/>
        </authorList>
    </citation>
    <scope>NUCLEOTIDE SEQUENCE [LARGE SCALE GENOMIC DNA]</scope>
    <source>
        <strain>ATCC 33530 / DSM 19775 / NCTC 10195 / G37</strain>
    </source>
</reference>
<organism>
    <name type="scientific">Mycoplasma genitalium (strain ATCC 33530 / DSM 19775 / NCTC 10195 / G37)</name>
    <name type="common">Mycoplasmoides genitalium</name>
    <dbReference type="NCBI Taxonomy" id="243273"/>
    <lineage>
        <taxon>Bacteria</taxon>
        <taxon>Bacillati</taxon>
        <taxon>Mycoplasmatota</taxon>
        <taxon>Mycoplasmoidales</taxon>
        <taxon>Mycoplasmoidaceae</taxon>
        <taxon>Mycoplasmoides</taxon>
    </lineage>
</organism>
<sequence length="213" mass="24925">MDEKGILVAISGGSCSGKTTVAEMIYQLLSKKLKVAIICQDNYYKSYKNKPLLKRKTINFDHPDAFDWKLLRSHIEDLLNGSIVNVPLYDYINYTRAKKTAKIGPIDVVILEGLMPWFDEKLSRLSKLKIFIETNGEERLIRRIERDWQRGRNIDSIIKQWREIVAPMYEIFVEKMKRNADLILPWSQRREVSTSVLDVAIEHLFHKTVEKNN</sequence>
<keyword id="KW-0067">ATP-binding</keyword>
<keyword id="KW-0963">Cytoplasm</keyword>
<keyword id="KW-0418">Kinase</keyword>
<keyword id="KW-0547">Nucleotide-binding</keyword>
<keyword id="KW-1185">Reference proteome</keyword>
<keyword id="KW-0808">Transferase</keyword>
<proteinExistence type="inferred from homology"/>
<feature type="chain" id="PRO_0000164480" description="Uridine kinase">
    <location>
        <begin position="1"/>
        <end position="213"/>
    </location>
</feature>
<feature type="binding site" evidence="2">
    <location>
        <begin position="12"/>
        <end position="19"/>
    </location>
    <ligand>
        <name>ATP</name>
        <dbReference type="ChEBI" id="CHEBI:30616"/>
    </ligand>
</feature>
<dbReference type="EC" id="2.7.1.48"/>
<dbReference type="EMBL" id="L43967">
    <property type="protein sequence ID" value="AAC71609.1"/>
    <property type="molecule type" value="Genomic_DNA"/>
</dbReference>
<dbReference type="PIR" id="C64242">
    <property type="entry name" value="C64242"/>
</dbReference>
<dbReference type="RefSeq" id="WP_009885943.1">
    <property type="nucleotide sequence ID" value="NC_000908.2"/>
</dbReference>
<dbReference type="SMR" id="P47622"/>
<dbReference type="FunCoup" id="P47622">
    <property type="interactions" value="124"/>
</dbReference>
<dbReference type="STRING" id="243273.MG_382"/>
<dbReference type="GeneID" id="88282566"/>
<dbReference type="KEGG" id="mge:MG_382"/>
<dbReference type="eggNOG" id="COG0572">
    <property type="taxonomic scope" value="Bacteria"/>
</dbReference>
<dbReference type="HOGENOM" id="CLU_021278_1_2_14"/>
<dbReference type="InParanoid" id="P47622"/>
<dbReference type="OrthoDB" id="9777642at2"/>
<dbReference type="BioCyc" id="MGEN243273:G1GJ2-477-MONOMER"/>
<dbReference type="UniPathway" id="UPA00574">
    <property type="reaction ID" value="UER00637"/>
</dbReference>
<dbReference type="UniPathway" id="UPA00579">
    <property type="reaction ID" value="UER00640"/>
</dbReference>
<dbReference type="Proteomes" id="UP000000807">
    <property type="component" value="Chromosome"/>
</dbReference>
<dbReference type="GO" id="GO:0005737">
    <property type="term" value="C:cytoplasm"/>
    <property type="evidence" value="ECO:0000318"/>
    <property type="project" value="GO_Central"/>
</dbReference>
<dbReference type="GO" id="GO:0005524">
    <property type="term" value="F:ATP binding"/>
    <property type="evidence" value="ECO:0007669"/>
    <property type="project" value="UniProtKB-UniRule"/>
</dbReference>
<dbReference type="GO" id="GO:0043771">
    <property type="term" value="F:cytidine kinase activity"/>
    <property type="evidence" value="ECO:0007669"/>
    <property type="project" value="RHEA"/>
</dbReference>
<dbReference type="GO" id="GO:0004849">
    <property type="term" value="F:uridine kinase activity"/>
    <property type="evidence" value="ECO:0007669"/>
    <property type="project" value="UniProtKB-UniRule"/>
</dbReference>
<dbReference type="GO" id="GO:0044211">
    <property type="term" value="P:CTP salvage"/>
    <property type="evidence" value="ECO:0007669"/>
    <property type="project" value="UniProtKB-UniRule"/>
</dbReference>
<dbReference type="GO" id="GO:0044206">
    <property type="term" value="P:UMP salvage"/>
    <property type="evidence" value="ECO:0007669"/>
    <property type="project" value="UniProtKB-UniRule"/>
</dbReference>
<dbReference type="CDD" id="cd02023">
    <property type="entry name" value="UMPK"/>
    <property type="match status" value="1"/>
</dbReference>
<dbReference type="Gene3D" id="3.40.50.300">
    <property type="entry name" value="P-loop containing nucleotide triphosphate hydrolases"/>
    <property type="match status" value="1"/>
</dbReference>
<dbReference type="HAMAP" id="MF_00551">
    <property type="entry name" value="Uridine_kinase"/>
    <property type="match status" value="1"/>
</dbReference>
<dbReference type="InterPro" id="IPR027417">
    <property type="entry name" value="P-loop_NTPase"/>
</dbReference>
<dbReference type="InterPro" id="IPR006083">
    <property type="entry name" value="PRK/URK"/>
</dbReference>
<dbReference type="InterPro" id="IPR026008">
    <property type="entry name" value="Uridine_kinase"/>
</dbReference>
<dbReference type="InterPro" id="IPR000764">
    <property type="entry name" value="Uridine_kinase-like"/>
</dbReference>
<dbReference type="NCBIfam" id="NF004018">
    <property type="entry name" value="PRK05480.1"/>
    <property type="match status" value="1"/>
</dbReference>
<dbReference type="NCBIfam" id="TIGR00235">
    <property type="entry name" value="udk"/>
    <property type="match status" value="1"/>
</dbReference>
<dbReference type="PANTHER" id="PTHR10285">
    <property type="entry name" value="URIDINE KINASE"/>
    <property type="match status" value="1"/>
</dbReference>
<dbReference type="Pfam" id="PF00485">
    <property type="entry name" value="PRK"/>
    <property type="match status" value="1"/>
</dbReference>
<dbReference type="PRINTS" id="PR00988">
    <property type="entry name" value="URIDINKINASE"/>
</dbReference>
<dbReference type="SUPFAM" id="SSF52540">
    <property type="entry name" value="P-loop containing nucleoside triphosphate hydrolases"/>
    <property type="match status" value="1"/>
</dbReference>
<comment type="catalytic activity">
    <reaction>
        <text>uridine + ATP = UMP + ADP + H(+)</text>
        <dbReference type="Rhea" id="RHEA:16825"/>
        <dbReference type="ChEBI" id="CHEBI:15378"/>
        <dbReference type="ChEBI" id="CHEBI:16704"/>
        <dbReference type="ChEBI" id="CHEBI:30616"/>
        <dbReference type="ChEBI" id="CHEBI:57865"/>
        <dbReference type="ChEBI" id="CHEBI:456216"/>
        <dbReference type="EC" id="2.7.1.48"/>
    </reaction>
</comment>
<comment type="catalytic activity">
    <reaction>
        <text>cytidine + ATP = CMP + ADP + H(+)</text>
        <dbReference type="Rhea" id="RHEA:24674"/>
        <dbReference type="ChEBI" id="CHEBI:15378"/>
        <dbReference type="ChEBI" id="CHEBI:17562"/>
        <dbReference type="ChEBI" id="CHEBI:30616"/>
        <dbReference type="ChEBI" id="CHEBI:60377"/>
        <dbReference type="ChEBI" id="CHEBI:456216"/>
        <dbReference type="EC" id="2.7.1.48"/>
    </reaction>
</comment>
<comment type="pathway">
    <text>Pyrimidine metabolism; CTP biosynthesis via salvage pathway; CTP from cytidine: step 1/3.</text>
</comment>
<comment type="pathway">
    <text>Pyrimidine metabolism; UMP biosynthesis via salvage pathway; UMP from uridine: step 1/1.</text>
</comment>
<comment type="subcellular location">
    <subcellularLocation>
        <location evidence="1">Cytoplasm</location>
    </subcellularLocation>
</comment>
<comment type="similarity">
    <text evidence="3">Belongs to the uridine kinase family.</text>
</comment>
<protein>
    <recommendedName>
        <fullName>Uridine kinase</fullName>
        <ecNumber>2.7.1.48</ecNumber>
    </recommendedName>
    <alternativeName>
        <fullName>Cytidine monophosphokinase</fullName>
    </alternativeName>
    <alternativeName>
        <fullName>Uridine monophosphokinase</fullName>
    </alternativeName>
</protein>
<evidence type="ECO:0000250" key="1"/>
<evidence type="ECO:0000255" key="2"/>
<evidence type="ECO:0000305" key="3"/>
<accession>P47622</accession>